<dbReference type="EMBL" id="CP000680">
    <property type="protein sequence ID" value="ABP83330.1"/>
    <property type="molecule type" value="Genomic_DNA"/>
</dbReference>
<dbReference type="SMR" id="A4XPR4"/>
<dbReference type="STRING" id="399739.Pmen_0560"/>
<dbReference type="KEGG" id="pmy:Pmen_0560"/>
<dbReference type="PATRIC" id="fig|399739.8.peg.569"/>
<dbReference type="eggNOG" id="COG3263">
    <property type="taxonomic scope" value="Bacteria"/>
</dbReference>
<dbReference type="HOGENOM" id="CLU_005912_9_2_6"/>
<dbReference type="OrthoDB" id="9810759at2"/>
<dbReference type="GO" id="GO:0005886">
    <property type="term" value="C:plasma membrane"/>
    <property type="evidence" value="ECO:0007669"/>
    <property type="project" value="UniProtKB-SubCell"/>
</dbReference>
<dbReference type="GO" id="GO:0050660">
    <property type="term" value="F:flavin adenine dinucleotide binding"/>
    <property type="evidence" value="ECO:0007669"/>
    <property type="project" value="InterPro"/>
</dbReference>
<dbReference type="GO" id="GO:0015386">
    <property type="term" value="F:potassium:proton antiporter activity"/>
    <property type="evidence" value="ECO:0007669"/>
    <property type="project" value="UniProtKB-UniRule"/>
</dbReference>
<dbReference type="GO" id="GO:0006884">
    <property type="term" value="P:cell volume homeostasis"/>
    <property type="evidence" value="ECO:0007669"/>
    <property type="project" value="InterPro"/>
</dbReference>
<dbReference type="Gene3D" id="1.20.1530.20">
    <property type="match status" value="1"/>
</dbReference>
<dbReference type="Gene3D" id="3.30.465.10">
    <property type="match status" value="1"/>
</dbReference>
<dbReference type="Gene3D" id="3.30.70.1450">
    <property type="entry name" value="Regulator of K+ conductance, C-terminal domain"/>
    <property type="match status" value="1"/>
</dbReference>
<dbReference type="HAMAP" id="MF_01075">
    <property type="entry name" value="NhaP2"/>
    <property type="match status" value="1"/>
</dbReference>
<dbReference type="InterPro" id="IPR006153">
    <property type="entry name" value="Cation/H_exchanger_TM"/>
</dbReference>
<dbReference type="InterPro" id="IPR036318">
    <property type="entry name" value="FAD-bd_PCMH-like_sf"/>
</dbReference>
<dbReference type="InterPro" id="IPR016169">
    <property type="entry name" value="FAD-bd_PCMH_sub2"/>
</dbReference>
<dbReference type="InterPro" id="IPR038770">
    <property type="entry name" value="Na+/solute_symporter_sf"/>
</dbReference>
<dbReference type="InterPro" id="IPR023729">
    <property type="entry name" value="NhaP2"/>
</dbReference>
<dbReference type="InterPro" id="IPR006037">
    <property type="entry name" value="RCK_C"/>
</dbReference>
<dbReference type="InterPro" id="IPR036721">
    <property type="entry name" value="RCK_C_sf"/>
</dbReference>
<dbReference type="InterPro" id="IPR005170">
    <property type="entry name" value="Transptr-assoc_dom"/>
</dbReference>
<dbReference type="NCBIfam" id="NF003714">
    <property type="entry name" value="PRK05326.1-1"/>
    <property type="match status" value="1"/>
</dbReference>
<dbReference type="NCBIfam" id="NF003715">
    <property type="entry name" value="PRK05326.1-2"/>
    <property type="match status" value="1"/>
</dbReference>
<dbReference type="NCBIfam" id="NF003716">
    <property type="entry name" value="PRK05326.1-3"/>
    <property type="match status" value="1"/>
</dbReference>
<dbReference type="PANTHER" id="PTHR32507:SF7">
    <property type="entry name" value="K(+)_H(+) ANTIPORTER NHAP2"/>
    <property type="match status" value="1"/>
</dbReference>
<dbReference type="PANTHER" id="PTHR32507">
    <property type="entry name" value="NA(+)/H(+) ANTIPORTER 1"/>
    <property type="match status" value="1"/>
</dbReference>
<dbReference type="Pfam" id="PF03471">
    <property type="entry name" value="CorC_HlyC"/>
    <property type="match status" value="1"/>
</dbReference>
<dbReference type="Pfam" id="PF00999">
    <property type="entry name" value="Na_H_Exchanger"/>
    <property type="match status" value="1"/>
</dbReference>
<dbReference type="Pfam" id="PF02080">
    <property type="entry name" value="TrkA_C"/>
    <property type="match status" value="1"/>
</dbReference>
<dbReference type="SMART" id="SM01091">
    <property type="entry name" value="CorC_HlyC"/>
    <property type="match status" value="1"/>
</dbReference>
<dbReference type="SUPFAM" id="SSF56176">
    <property type="entry name" value="FAD-binding/transporter-associated domain-like"/>
    <property type="match status" value="1"/>
</dbReference>
<dbReference type="SUPFAM" id="SSF116726">
    <property type="entry name" value="TrkA C-terminal domain-like"/>
    <property type="match status" value="1"/>
</dbReference>
<dbReference type="PROSITE" id="PS51202">
    <property type="entry name" value="RCK_C"/>
    <property type="match status" value="1"/>
</dbReference>
<keyword id="KW-0050">Antiport</keyword>
<keyword id="KW-0997">Cell inner membrane</keyword>
<keyword id="KW-1003">Cell membrane</keyword>
<keyword id="KW-0406">Ion transport</keyword>
<keyword id="KW-0472">Membrane</keyword>
<keyword id="KW-0630">Potassium</keyword>
<keyword id="KW-0633">Potassium transport</keyword>
<keyword id="KW-0812">Transmembrane</keyword>
<keyword id="KW-1133">Transmembrane helix</keyword>
<keyword id="KW-0813">Transport</keyword>
<feature type="chain" id="PRO_1000064669" description="K(+)/H(+) antiporter NhaP2">
    <location>
        <begin position="1"/>
        <end position="581"/>
    </location>
</feature>
<feature type="transmembrane region" description="Helical" evidence="1">
    <location>
        <begin position="6"/>
        <end position="26"/>
    </location>
</feature>
<feature type="transmembrane region" description="Helical" evidence="1">
    <location>
        <begin position="34"/>
        <end position="54"/>
    </location>
</feature>
<feature type="transmembrane region" description="Helical" evidence="1">
    <location>
        <begin position="58"/>
        <end position="78"/>
    </location>
</feature>
<feature type="transmembrane region" description="Helical" evidence="1">
    <location>
        <begin position="95"/>
        <end position="115"/>
    </location>
</feature>
<feature type="transmembrane region" description="Helical" evidence="1">
    <location>
        <begin position="122"/>
        <end position="142"/>
    </location>
</feature>
<feature type="transmembrane region" description="Helical" evidence="1">
    <location>
        <begin position="163"/>
        <end position="183"/>
    </location>
</feature>
<feature type="transmembrane region" description="Helical" evidence="1">
    <location>
        <begin position="189"/>
        <end position="209"/>
    </location>
</feature>
<feature type="transmembrane region" description="Helical" evidence="1">
    <location>
        <begin position="231"/>
        <end position="251"/>
    </location>
</feature>
<feature type="transmembrane region" description="Helical" evidence="1">
    <location>
        <begin position="280"/>
        <end position="300"/>
    </location>
</feature>
<feature type="transmembrane region" description="Helical" evidence="1">
    <location>
        <begin position="303"/>
        <end position="323"/>
    </location>
</feature>
<feature type="transmembrane region" description="Helical" evidence="1">
    <location>
        <begin position="334"/>
        <end position="354"/>
    </location>
</feature>
<feature type="transmembrane region" description="Helical" evidence="1">
    <location>
        <begin position="363"/>
        <end position="383"/>
    </location>
</feature>
<feature type="domain" description="RCK C-terminal" evidence="1">
    <location>
        <begin position="404"/>
        <end position="485"/>
    </location>
</feature>
<sequence>MDASAINNLFLIGALLVAASILVSAFGTRFGIPILVIFLAVGMLAGTDGPGGIVFNNYPLAYLVGNLALAVILLDGGMRTRVSSFRVALWPSLSLATVGVVITAGLTGLAAAWLFNLTLLEGLLIGAIVGSTDAAAVFSLLGGRGLNERVSSTLEIESGSNDPMAVFLTVTLIAMLASGQTGFSWDLPIQLVQQFGLGALLGLGGGWLLLKLINRMELATGLYPLLVVSGGLIIFAITTAVGGSGILAIYLCGLLLGNRPIRSRHGILHMLDGLTWLAQIGMFLVLGLLITPHELLPIALPALALALWMILFARPLSIFLGLLPFRAFHDRERIFIAWVGLRGAVPIILAVFPLMAGLPNAQLFFNVAFFIVIVSLLLQGTSLPLAAKLMRVTVPPEPAPVSRAGLEVHPTSQWELFVYRLGAEKWCIGAALRELNMPEGTRIAALFRGRELLHPSGSTRLEAGDLLCVIGHEHDLPALGKLFSQAPKRGQDLRFFGDFVLEGDAELAAVAALYGLKLDGLDGHQPLGRFIAHEIGGEPVVGDQVEWQGLTWTVASMEGNKVRKVGVRFPEGSRPGPGLFL</sequence>
<proteinExistence type="inferred from homology"/>
<evidence type="ECO:0000255" key="1">
    <source>
        <dbReference type="HAMAP-Rule" id="MF_01075"/>
    </source>
</evidence>
<comment type="function">
    <text evidence="1">K(+)/H(+) antiporter that extrudes potassium in exchange for external protons and maintains the internal concentration of potassium under toxic levels.</text>
</comment>
<comment type="catalytic activity">
    <reaction evidence="1">
        <text>K(+)(in) + H(+)(out) = K(+)(out) + H(+)(in)</text>
        <dbReference type="Rhea" id="RHEA:29467"/>
        <dbReference type="ChEBI" id="CHEBI:15378"/>
        <dbReference type="ChEBI" id="CHEBI:29103"/>
    </reaction>
    <physiologicalReaction direction="left-to-right" evidence="1">
        <dbReference type="Rhea" id="RHEA:29468"/>
    </physiologicalReaction>
</comment>
<comment type="subcellular location">
    <subcellularLocation>
        <location evidence="1">Cell inner membrane</location>
        <topology evidence="1">Multi-pass membrane protein</topology>
    </subcellularLocation>
</comment>
<comment type="similarity">
    <text evidence="1">Belongs to the monovalent cation:proton antiporter 1 (CPA1) transporter (TC 2.A.36) family. NhaP2 subfamily.</text>
</comment>
<protein>
    <recommendedName>
        <fullName evidence="1">K(+)/H(+) antiporter NhaP2</fullName>
    </recommendedName>
    <alternativeName>
        <fullName evidence="1">Potassium/proton antiporter NhaP2</fullName>
    </alternativeName>
</protein>
<reference key="1">
    <citation type="submission" date="2007-04" db="EMBL/GenBank/DDBJ databases">
        <title>Complete sequence of Pseudomonas mendocina ymp.</title>
        <authorList>
            <consortium name="US DOE Joint Genome Institute"/>
            <person name="Copeland A."/>
            <person name="Lucas S."/>
            <person name="Lapidus A."/>
            <person name="Barry K."/>
            <person name="Glavina del Rio T."/>
            <person name="Dalin E."/>
            <person name="Tice H."/>
            <person name="Pitluck S."/>
            <person name="Kiss H."/>
            <person name="Brettin T."/>
            <person name="Detter J.C."/>
            <person name="Bruce D."/>
            <person name="Han C."/>
            <person name="Schmutz J."/>
            <person name="Larimer F."/>
            <person name="Land M."/>
            <person name="Hauser L."/>
            <person name="Kyrpides N."/>
            <person name="Mikhailova N."/>
            <person name="Hersman L."/>
            <person name="Dubois J."/>
            <person name="Maurice P."/>
            <person name="Richardson P."/>
        </authorList>
    </citation>
    <scope>NUCLEOTIDE SEQUENCE [LARGE SCALE GENOMIC DNA]</scope>
    <source>
        <strain>ymp</strain>
    </source>
</reference>
<accession>A4XPR4</accession>
<gene>
    <name evidence="1" type="primary">nhaP2</name>
    <name type="synonym">cvrA</name>
    <name type="ordered locus">Pmen_0560</name>
</gene>
<organism>
    <name type="scientific">Ectopseudomonas mendocina (strain ymp)</name>
    <name type="common">Pseudomonas mendocina</name>
    <dbReference type="NCBI Taxonomy" id="399739"/>
    <lineage>
        <taxon>Bacteria</taxon>
        <taxon>Pseudomonadati</taxon>
        <taxon>Pseudomonadota</taxon>
        <taxon>Gammaproteobacteria</taxon>
        <taxon>Pseudomonadales</taxon>
        <taxon>Pseudomonadaceae</taxon>
        <taxon>Ectopseudomonas</taxon>
    </lineage>
</organism>
<name>NHAP2_ECTM1</name>